<protein>
    <recommendedName>
        <fullName evidence="1">Cytochrome c biogenesis ATP-binding export protein CcmA</fullName>
        <ecNumber evidence="1">7.6.2.5</ecNumber>
    </recommendedName>
    <alternativeName>
        <fullName evidence="1">Heme exporter protein A</fullName>
    </alternativeName>
</protein>
<keyword id="KW-0067">ATP-binding</keyword>
<keyword id="KW-0997">Cell inner membrane</keyword>
<keyword id="KW-1003">Cell membrane</keyword>
<keyword id="KW-0201">Cytochrome c-type biogenesis</keyword>
<keyword id="KW-0472">Membrane</keyword>
<keyword id="KW-0547">Nucleotide-binding</keyword>
<keyword id="KW-1185">Reference proteome</keyword>
<keyword id="KW-1278">Translocase</keyword>
<keyword id="KW-0813">Transport</keyword>
<feature type="chain" id="PRO_0000271928" description="Cytochrome c biogenesis ATP-binding export protein CcmA">
    <location>
        <begin position="1"/>
        <end position="211"/>
    </location>
</feature>
<feature type="domain" description="ABC transporter" evidence="1">
    <location>
        <begin position="8"/>
        <end position="210"/>
    </location>
</feature>
<feature type="binding site" evidence="1">
    <location>
        <begin position="40"/>
        <end position="47"/>
    </location>
    <ligand>
        <name>ATP</name>
        <dbReference type="ChEBI" id="CHEBI:30616"/>
    </ligand>
</feature>
<comment type="function">
    <text evidence="1">Part of the ABC transporter complex CcmAB involved in the biogenesis of c-type cytochromes; once thought to export heme, this seems not to be the case, but its exact role is uncertain. Responsible for energy coupling to the transport system.</text>
</comment>
<comment type="catalytic activity">
    <reaction evidence="1">
        <text>heme b(in) + ATP + H2O = heme b(out) + ADP + phosphate + H(+)</text>
        <dbReference type="Rhea" id="RHEA:19261"/>
        <dbReference type="ChEBI" id="CHEBI:15377"/>
        <dbReference type="ChEBI" id="CHEBI:15378"/>
        <dbReference type="ChEBI" id="CHEBI:30616"/>
        <dbReference type="ChEBI" id="CHEBI:43474"/>
        <dbReference type="ChEBI" id="CHEBI:60344"/>
        <dbReference type="ChEBI" id="CHEBI:456216"/>
        <dbReference type="EC" id="7.6.2.5"/>
    </reaction>
</comment>
<comment type="subunit">
    <text evidence="1">The complex is composed of two ATP-binding proteins (CcmA) and two transmembrane proteins (CcmB).</text>
</comment>
<comment type="subcellular location">
    <subcellularLocation>
        <location evidence="1">Cell inner membrane</location>
        <topology evidence="1">Peripheral membrane protein</topology>
    </subcellularLocation>
</comment>
<comment type="similarity">
    <text evidence="1">Belongs to the ABC transporter superfamily. CcmA exporter (TC 3.A.1.107) family.</text>
</comment>
<evidence type="ECO:0000255" key="1">
    <source>
        <dbReference type="HAMAP-Rule" id="MF_01707"/>
    </source>
</evidence>
<gene>
    <name evidence="1" type="primary">ccmA</name>
    <name type="ordered locus">HCH_04369</name>
</gene>
<sequence>MTGQTPLLEAKNLQCERDDRILFENLSFSVHSGDVVQIEGPNGAGKTTLLKLLCGLAPLRQGELFWRGERMSQARPQFLSSLLYLGHKTGVKALLTPLENLRAWCAQREDVNEERMMSALETVGLAGYEYSPCNSLSAGQQRRAALARLHVSSAPLWVLDEAFTAIDKKGVAQLETLLREKANGGGAVILTTHHSLHLSGEVRRIQLGAVS</sequence>
<reference key="1">
    <citation type="journal article" date="2005" name="Nucleic Acids Res.">
        <title>Genomic blueprint of Hahella chejuensis, a marine microbe producing an algicidal agent.</title>
        <authorList>
            <person name="Jeong H."/>
            <person name="Yim J.H."/>
            <person name="Lee C."/>
            <person name="Choi S.-H."/>
            <person name="Park Y.K."/>
            <person name="Yoon S.H."/>
            <person name="Hur C.-G."/>
            <person name="Kang H.-Y."/>
            <person name="Kim D."/>
            <person name="Lee H.H."/>
            <person name="Park K.H."/>
            <person name="Park S.-H."/>
            <person name="Park H.-S."/>
            <person name="Lee H.K."/>
            <person name="Oh T.K."/>
            <person name="Kim J.F."/>
        </authorList>
    </citation>
    <scope>NUCLEOTIDE SEQUENCE [LARGE SCALE GENOMIC DNA]</scope>
    <source>
        <strain>KCTC 2396</strain>
    </source>
</reference>
<dbReference type="EC" id="7.6.2.5" evidence="1"/>
<dbReference type="EMBL" id="CP000155">
    <property type="protein sequence ID" value="ABC31075.1"/>
    <property type="molecule type" value="Genomic_DNA"/>
</dbReference>
<dbReference type="RefSeq" id="WP_011398142.1">
    <property type="nucleotide sequence ID" value="NC_007645.1"/>
</dbReference>
<dbReference type="SMR" id="Q2SE49"/>
<dbReference type="STRING" id="349521.HCH_04369"/>
<dbReference type="KEGG" id="hch:HCH_04369"/>
<dbReference type="eggNOG" id="COG4133">
    <property type="taxonomic scope" value="Bacteria"/>
</dbReference>
<dbReference type="HOGENOM" id="CLU_000604_1_2_6"/>
<dbReference type="OrthoDB" id="9800654at2"/>
<dbReference type="Proteomes" id="UP000000238">
    <property type="component" value="Chromosome"/>
</dbReference>
<dbReference type="GO" id="GO:0005886">
    <property type="term" value="C:plasma membrane"/>
    <property type="evidence" value="ECO:0007669"/>
    <property type="project" value="UniProtKB-SubCell"/>
</dbReference>
<dbReference type="GO" id="GO:0015439">
    <property type="term" value="F:ABC-type heme transporter activity"/>
    <property type="evidence" value="ECO:0007669"/>
    <property type="project" value="UniProtKB-EC"/>
</dbReference>
<dbReference type="GO" id="GO:0005524">
    <property type="term" value="F:ATP binding"/>
    <property type="evidence" value="ECO:0007669"/>
    <property type="project" value="UniProtKB-KW"/>
</dbReference>
<dbReference type="GO" id="GO:0016887">
    <property type="term" value="F:ATP hydrolysis activity"/>
    <property type="evidence" value="ECO:0007669"/>
    <property type="project" value="InterPro"/>
</dbReference>
<dbReference type="GO" id="GO:0017004">
    <property type="term" value="P:cytochrome complex assembly"/>
    <property type="evidence" value="ECO:0007669"/>
    <property type="project" value="UniProtKB-KW"/>
</dbReference>
<dbReference type="Gene3D" id="3.40.50.300">
    <property type="entry name" value="P-loop containing nucleotide triphosphate hydrolases"/>
    <property type="match status" value="1"/>
</dbReference>
<dbReference type="InterPro" id="IPR003593">
    <property type="entry name" value="AAA+_ATPase"/>
</dbReference>
<dbReference type="InterPro" id="IPR003439">
    <property type="entry name" value="ABC_transporter-like_ATP-bd"/>
</dbReference>
<dbReference type="InterPro" id="IPR005895">
    <property type="entry name" value="ABC_transptr_haem_export_CcmA"/>
</dbReference>
<dbReference type="InterPro" id="IPR027417">
    <property type="entry name" value="P-loop_NTPase"/>
</dbReference>
<dbReference type="NCBIfam" id="TIGR01189">
    <property type="entry name" value="ccmA"/>
    <property type="match status" value="1"/>
</dbReference>
<dbReference type="NCBIfam" id="NF010061">
    <property type="entry name" value="PRK13538.1"/>
    <property type="match status" value="1"/>
</dbReference>
<dbReference type="PANTHER" id="PTHR43499">
    <property type="entry name" value="ABC TRANSPORTER I FAMILY MEMBER 1"/>
    <property type="match status" value="1"/>
</dbReference>
<dbReference type="PANTHER" id="PTHR43499:SF1">
    <property type="entry name" value="ABC TRANSPORTER I FAMILY MEMBER 1"/>
    <property type="match status" value="1"/>
</dbReference>
<dbReference type="Pfam" id="PF00005">
    <property type="entry name" value="ABC_tran"/>
    <property type="match status" value="1"/>
</dbReference>
<dbReference type="SMART" id="SM00382">
    <property type="entry name" value="AAA"/>
    <property type="match status" value="1"/>
</dbReference>
<dbReference type="SUPFAM" id="SSF52540">
    <property type="entry name" value="P-loop containing nucleoside triphosphate hydrolases"/>
    <property type="match status" value="1"/>
</dbReference>
<dbReference type="PROSITE" id="PS50893">
    <property type="entry name" value="ABC_TRANSPORTER_2"/>
    <property type="match status" value="1"/>
</dbReference>
<dbReference type="PROSITE" id="PS51243">
    <property type="entry name" value="CCMA"/>
    <property type="match status" value="1"/>
</dbReference>
<accession>Q2SE49</accession>
<organism>
    <name type="scientific">Hahella chejuensis (strain KCTC 2396)</name>
    <dbReference type="NCBI Taxonomy" id="349521"/>
    <lineage>
        <taxon>Bacteria</taxon>
        <taxon>Pseudomonadati</taxon>
        <taxon>Pseudomonadota</taxon>
        <taxon>Gammaproteobacteria</taxon>
        <taxon>Oceanospirillales</taxon>
        <taxon>Hahellaceae</taxon>
        <taxon>Hahella</taxon>
    </lineage>
</organism>
<name>CCMA_HAHCH</name>
<proteinExistence type="inferred from homology"/>